<comment type="function">
    <text evidence="1">The RecF protein is involved in DNA metabolism; it is required for DNA replication and normal SOS inducibility. RecF binds preferentially to single-stranded, linear DNA. It also seems to bind ATP.</text>
</comment>
<comment type="subcellular location">
    <subcellularLocation>
        <location evidence="1">Cytoplasm</location>
    </subcellularLocation>
</comment>
<comment type="similarity">
    <text evidence="1">Belongs to the RecF family.</text>
</comment>
<gene>
    <name evidence="1" type="primary">recF</name>
    <name type="ordered locus">BCG9842_B5316</name>
</gene>
<feature type="chain" id="PRO_1000121087" description="DNA replication and repair protein RecF">
    <location>
        <begin position="1"/>
        <end position="375"/>
    </location>
</feature>
<feature type="binding site" evidence="1">
    <location>
        <begin position="30"/>
        <end position="37"/>
    </location>
    <ligand>
        <name>ATP</name>
        <dbReference type="ChEBI" id="CHEBI:30616"/>
    </ligand>
</feature>
<evidence type="ECO:0000255" key="1">
    <source>
        <dbReference type="HAMAP-Rule" id="MF_00365"/>
    </source>
</evidence>
<proteinExistence type="inferred from homology"/>
<keyword id="KW-0067">ATP-binding</keyword>
<keyword id="KW-0963">Cytoplasm</keyword>
<keyword id="KW-0227">DNA damage</keyword>
<keyword id="KW-0234">DNA repair</keyword>
<keyword id="KW-0235">DNA replication</keyword>
<keyword id="KW-0238">DNA-binding</keyword>
<keyword id="KW-0547">Nucleotide-binding</keyword>
<keyword id="KW-0742">SOS response</keyword>
<protein>
    <recommendedName>
        <fullName evidence="1">DNA replication and repair protein RecF</fullName>
    </recommendedName>
</protein>
<reference key="1">
    <citation type="submission" date="2008-10" db="EMBL/GenBank/DDBJ databases">
        <title>Genome sequence of Bacillus cereus G9842.</title>
        <authorList>
            <person name="Dodson R.J."/>
            <person name="Durkin A.S."/>
            <person name="Rosovitz M.J."/>
            <person name="Rasko D.A."/>
            <person name="Hoffmaster A."/>
            <person name="Ravel J."/>
            <person name="Sutton G."/>
        </authorList>
    </citation>
    <scope>NUCLEOTIDE SEQUENCE [LARGE SCALE GENOMIC DNA]</scope>
    <source>
        <strain>G9842</strain>
    </source>
</reference>
<organism>
    <name type="scientific">Bacillus cereus (strain G9842)</name>
    <dbReference type="NCBI Taxonomy" id="405531"/>
    <lineage>
        <taxon>Bacteria</taxon>
        <taxon>Bacillati</taxon>
        <taxon>Bacillota</taxon>
        <taxon>Bacilli</taxon>
        <taxon>Bacillales</taxon>
        <taxon>Bacillaceae</taxon>
        <taxon>Bacillus</taxon>
        <taxon>Bacillus cereus group</taxon>
    </lineage>
</organism>
<sequence>MFISEIQLKNYRNYEKLELSFEDKVNVIIGENAQGKTNLMEAIYVLAMAKSHRTSNDRELIRWDEEFGQIKGKLQKRNSSLSLELNISKKGKKAKLNQLEQQKLSQYIGVMNVVMFAPEDLNLVKGSPQVRRRFLDMELGQIAPIYLYELSQYQKVLTQRNHLLKKMQGNSKNEETMLDVFTLQLIEHGAKILQKRFEFLHLLQEWAAPIHRGISRGLEELEIVYKPSVDVSESMDLSKIKEVYYESFQSVKQREIFRGTTLIGPHRDDLQFFVNSKNVQVFGSQGQQRTTALSLKLAEIELIYSEVKEYPILLLDDVLSELDDYRQSHLLNTIQGKVQTFVTTTSVDGIEHETLKDAKTIHVTNGTVDCEIDRA</sequence>
<accession>B7IS23</accession>
<dbReference type="EMBL" id="CP001186">
    <property type="protein sequence ID" value="ACK98413.1"/>
    <property type="molecule type" value="Genomic_DNA"/>
</dbReference>
<dbReference type="RefSeq" id="WP_000470754.1">
    <property type="nucleotide sequence ID" value="NC_011772.1"/>
</dbReference>
<dbReference type="SMR" id="B7IS23"/>
<dbReference type="KEGG" id="bcg:BCG9842_B5316"/>
<dbReference type="HOGENOM" id="CLU_040267_0_1_9"/>
<dbReference type="Proteomes" id="UP000006744">
    <property type="component" value="Chromosome"/>
</dbReference>
<dbReference type="GO" id="GO:0005737">
    <property type="term" value="C:cytoplasm"/>
    <property type="evidence" value="ECO:0007669"/>
    <property type="project" value="UniProtKB-SubCell"/>
</dbReference>
<dbReference type="GO" id="GO:0005524">
    <property type="term" value="F:ATP binding"/>
    <property type="evidence" value="ECO:0007669"/>
    <property type="project" value="UniProtKB-UniRule"/>
</dbReference>
<dbReference type="GO" id="GO:0003697">
    <property type="term" value="F:single-stranded DNA binding"/>
    <property type="evidence" value="ECO:0007669"/>
    <property type="project" value="UniProtKB-UniRule"/>
</dbReference>
<dbReference type="GO" id="GO:0006260">
    <property type="term" value="P:DNA replication"/>
    <property type="evidence" value="ECO:0007669"/>
    <property type="project" value="UniProtKB-UniRule"/>
</dbReference>
<dbReference type="GO" id="GO:0000731">
    <property type="term" value="P:DNA synthesis involved in DNA repair"/>
    <property type="evidence" value="ECO:0007669"/>
    <property type="project" value="TreeGrafter"/>
</dbReference>
<dbReference type="GO" id="GO:0006302">
    <property type="term" value="P:double-strand break repair"/>
    <property type="evidence" value="ECO:0007669"/>
    <property type="project" value="TreeGrafter"/>
</dbReference>
<dbReference type="GO" id="GO:0009432">
    <property type="term" value="P:SOS response"/>
    <property type="evidence" value="ECO:0007669"/>
    <property type="project" value="UniProtKB-UniRule"/>
</dbReference>
<dbReference type="CDD" id="cd03242">
    <property type="entry name" value="ABC_RecF"/>
    <property type="match status" value="1"/>
</dbReference>
<dbReference type="FunFam" id="1.20.1050.90:FF:000002">
    <property type="entry name" value="DNA replication and repair protein RecF"/>
    <property type="match status" value="1"/>
</dbReference>
<dbReference type="FunFam" id="3.40.50.300:FF:000400">
    <property type="entry name" value="DNA replication and repair protein RecF"/>
    <property type="match status" value="1"/>
</dbReference>
<dbReference type="Gene3D" id="3.40.50.300">
    <property type="entry name" value="P-loop containing nucleotide triphosphate hydrolases"/>
    <property type="match status" value="1"/>
</dbReference>
<dbReference type="Gene3D" id="1.20.1050.90">
    <property type="entry name" value="RecF/RecN/SMC, N-terminal domain"/>
    <property type="match status" value="1"/>
</dbReference>
<dbReference type="HAMAP" id="MF_00365">
    <property type="entry name" value="RecF"/>
    <property type="match status" value="1"/>
</dbReference>
<dbReference type="InterPro" id="IPR001238">
    <property type="entry name" value="DNA-binding_RecF"/>
</dbReference>
<dbReference type="InterPro" id="IPR018078">
    <property type="entry name" value="DNA-binding_RecF_CS"/>
</dbReference>
<dbReference type="InterPro" id="IPR027417">
    <property type="entry name" value="P-loop_NTPase"/>
</dbReference>
<dbReference type="InterPro" id="IPR003395">
    <property type="entry name" value="RecF/RecN/SMC_N"/>
</dbReference>
<dbReference type="InterPro" id="IPR042174">
    <property type="entry name" value="RecF_2"/>
</dbReference>
<dbReference type="NCBIfam" id="TIGR00611">
    <property type="entry name" value="recf"/>
    <property type="match status" value="1"/>
</dbReference>
<dbReference type="PANTHER" id="PTHR32182">
    <property type="entry name" value="DNA REPLICATION AND REPAIR PROTEIN RECF"/>
    <property type="match status" value="1"/>
</dbReference>
<dbReference type="PANTHER" id="PTHR32182:SF0">
    <property type="entry name" value="DNA REPLICATION AND REPAIR PROTEIN RECF"/>
    <property type="match status" value="1"/>
</dbReference>
<dbReference type="Pfam" id="PF02463">
    <property type="entry name" value="SMC_N"/>
    <property type="match status" value="1"/>
</dbReference>
<dbReference type="SUPFAM" id="SSF52540">
    <property type="entry name" value="P-loop containing nucleoside triphosphate hydrolases"/>
    <property type="match status" value="1"/>
</dbReference>
<dbReference type="PROSITE" id="PS00617">
    <property type="entry name" value="RECF_1"/>
    <property type="match status" value="1"/>
</dbReference>
<dbReference type="PROSITE" id="PS00618">
    <property type="entry name" value="RECF_2"/>
    <property type="match status" value="1"/>
</dbReference>
<name>RECF_BACC2</name>